<reference key="1">
    <citation type="journal article" date="2007" name="Proc. Natl. Acad. Sci. U.S.A.">
        <title>Deep-sea vent epsilon-proteobacterial genomes provide insights into emergence of pathogens.</title>
        <authorList>
            <person name="Nakagawa S."/>
            <person name="Takaki Y."/>
            <person name="Shimamura S."/>
            <person name="Reysenbach A.-L."/>
            <person name="Takai K."/>
            <person name="Horikoshi K."/>
        </authorList>
    </citation>
    <scope>NUCLEOTIDE SEQUENCE [LARGE SCALE GENOMIC DNA]</scope>
    <source>
        <strain>SB155-2</strain>
    </source>
</reference>
<feature type="chain" id="PRO_1000055274" description="Large ribosomal subunit protein uL6">
    <location>
        <begin position="1"/>
        <end position="178"/>
    </location>
</feature>
<sequence>MSRIGKQPVAIPSGVDVKIENGKIIAKKGNLTQEVEFGNRVNVSIEDNKIVFSPVGEDKQSKAFWGTYRALTNNAIEGLTKGFEKKLEINGVGYRAAVKGKELELQLGFSHPILYPIPEGIQISVEKNIITIKGHDKQKVGQVAAEIRSFRPPEPYKGKGVKYVDEVIIRKAGKTAKK</sequence>
<name>RL6_NITSB</name>
<protein>
    <recommendedName>
        <fullName evidence="1">Large ribosomal subunit protein uL6</fullName>
    </recommendedName>
    <alternativeName>
        <fullName evidence="2">50S ribosomal protein L6</fullName>
    </alternativeName>
</protein>
<gene>
    <name evidence="1" type="primary">rplF</name>
    <name type="ordered locus">NIS_0238</name>
</gene>
<evidence type="ECO:0000255" key="1">
    <source>
        <dbReference type="HAMAP-Rule" id="MF_01365"/>
    </source>
</evidence>
<evidence type="ECO:0000305" key="2"/>
<accession>A6Q1J3</accession>
<keyword id="KW-1185">Reference proteome</keyword>
<keyword id="KW-0687">Ribonucleoprotein</keyword>
<keyword id="KW-0689">Ribosomal protein</keyword>
<keyword id="KW-0694">RNA-binding</keyword>
<keyword id="KW-0699">rRNA-binding</keyword>
<comment type="function">
    <text evidence="1">This protein binds to the 23S rRNA, and is important in its secondary structure. It is located near the subunit interface in the base of the L7/L12 stalk, and near the tRNA binding site of the peptidyltransferase center.</text>
</comment>
<comment type="subunit">
    <text evidence="1">Part of the 50S ribosomal subunit.</text>
</comment>
<comment type="similarity">
    <text evidence="1">Belongs to the universal ribosomal protein uL6 family.</text>
</comment>
<organism>
    <name type="scientific">Nitratiruptor sp. (strain SB155-2)</name>
    <dbReference type="NCBI Taxonomy" id="387092"/>
    <lineage>
        <taxon>Bacteria</taxon>
        <taxon>Pseudomonadati</taxon>
        <taxon>Campylobacterota</taxon>
        <taxon>Epsilonproteobacteria</taxon>
        <taxon>Nautiliales</taxon>
        <taxon>Nitratiruptoraceae</taxon>
        <taxon>Nitratiruptor</taxon>
    </lineage>
</organism>
<dbReference type="EMBL" id="AP009178">
    <property type="protein sequence ID" value="BAF69352.1"/>
    <property type="molecule type" value="Genomic_DNA"/>
</dbReference>
<dbReference type="RefSeq" id="WP_012081615.1">
    <property type="nucleotide sequence ID" value="NC_009662.1"/>
</dbReference>
<dbReference type="SMR" id="A6Q1J3"/>
<dbReference type="FunCoup" id="A6Q1J3">
    <property type="interactions" value="533"/>
</dbReference>
<dbReference type="STRING" id="387092.NIS_0238"/>
<dbReference type="KEGG" id="nis:NIS_0238"/>
<dbReference type="eggNOG" id="COG0097">
    <property type="taxonomic scope" value="Bacteria"/>
</dbReference>
<dbReference type="HOGENOM" id="CLU_065464_1_2_7"/>
<dbReference type="InParanoid" id="A6Q1J3"/>
<dbReference type="OrthoDB" id="9805007at2"/>
<dbReference type="Proteomes" id="UP000001118">
    <property type="component" value="Chromosome"/>
</dbReference>
<dbReference type="GO" id="GO:0022625">
    <property type="term" value="C:cytosolic large ribosomal subunit"/>
    <property type="evidence" value="ECO:0007669"/>
    <property type="project" value="TreeGrafter"/>
</dbReference>
<dbReference type="GO" id="GO:0019843">
    <property type="term" value="F:rRNA binding"/>
    <property type="evidence" value="ECO:0007669"/>
    <property type="project" value="UniProtKB-UniRule"/>
</dbReference>
<dbReference type="GO" id="GO:0003735">
    <property type="term" value="F:structural constituent of ribosome"/>
    <property type="evidence" value="ECO:0007669"/>
    <property type="project" value="InterPro"/>
</dbReference>
<dbReference type="GO" id="GO:0002181">
    <property type="term" value="P:cytoplasmic translation"/>
    <property type="evidence" value="ECO:0007669"/>
    <property type="project" value="TreeGrafter"/>
</dbReference>
<dbReference type="FunFam" id="3.90.930.12:FF:000001">
    <property type="entry name" value="50S ribosomal protein L6"/>
    <property type="match status" value="1"/>
</dbReference>
<dbReference type="Gene3D" id="3.90.930.12">
    <property type="entry name" value="Ribosomal protein L6, alpha-beta domain"/>
    <property type="match status" value="2"/>
</dbReference>
<dbReference type="HAMAP" id="MF_01365_B">
    <property type="entry name" value="Ribosomal_uL6_B"/>
    <property type="match status" value="1"/>
</dbReference>
<dbReference type="InterPro" id="IPR000702">
    <property type="entry name" value="Ribosomal_uL6-like"/>
</dbReference>
<dbReference type="InterPro" id="IPR036789">
    <property type="entry name" value="Ribosomal_uL6-like_a/b-dom_sf"/>
</dbReference>
<dbReference type="InterPro" id="IPR020040">
    <property type="entry name" value="Ribosomal_uL6_a/b-dom"/>
</dbReference>
<dbReference type="InterPro" id="IPR019906">
    <property type="entry name" value="Ribosomal_uL6_bac-type"/>
</dbReference>
<dbReference type="InterPro" id="IPR002358">
    <property type="entry name" value="Ribosomal_uL6_CS"/>
</dbReference>
<dbReference type="NCBIfam" id="TIGR03654">
    <property type="entry name" value="L6_bact"/>
    <property type="match status" value="1"/>
</dbReference>
<dbReference type="PANTHER" id="PTHR11655">
    <property type="entry name" value="60S/50S RIBOSOMAL PROTEIN L6/L9"/>
    <property type="match status" value="1"/>
</dbReference>
<dbReference type="PANTHER" id="PTHR11655:SF14">
    <property type="entry name" value="LARGE RIBOSOMAL SUBUNIT PROTEIN UL6M"/>
    <property type="match status" value="1"/>
</dbReference>
<dbReference type="Pfam" id="PF00347">
    <property type="entry name" value="Ribosomal_L6"/>
    <property type="match status" value="2"/>
</dbReference>
<dbReference type="PIRSF" id="PIRSF002162">
    <property type="entry name" value="Ribosomal_L6"/>
    <property type="match status" value="1"/>
</dbReference>
<dbReference type="PRINTS" id="PR00059">
    <property type="entry name" value="RIBOSOMALL6"/>
</dbReference>
<dbReference type="SUPFAM" id="SSF56053">
    <property type="entry name" value="Ribosomal protein L6"/>
    <property type="match status" value="2"/>
</dbReference>
<dbReference type="PROSITE" id="PS00525">
    <property type="entry name" value="RIBOSOMAL_L6_1"/>
    <property type="match status" value="1"/>
</dbReference>
<proteinExistence type="inferred from homology"/>